<evidence type="ECO:0000250" key="1"/>
<evidence type="ECO:0000250" key="2">
    <source>
        <dbReference type="UniProtKB" id="O35923"/>
    </source>
</evidence>
<evidence type="ECO:0000250" key="3">
    <source>
        <dbReference type="UniProtKB" id="P51587"/>
    </source>
</evidence>
<evidence type="ECO:0000250" key="4">
    <source>
        <dbReference type="UniProtKB" id="P97929"/>
    </source>
</evidence>
<evidence type="ECO:0000256" key="5">
    <source>
        <dbReference type="SAM" id="MobiDB-lite"/>
    </source>
</evidence>
<accession>Q864S8</accession>
<keyword id="KW-0963">Cytoplasm</keyword>
<keyword id="KW-0206">Cytoskeleton</keyword>
<keyword id="KW-0227">DNA damage</keyword>
<keyword id="KW-0233">DNA recombination</keyword>
<keyword id="KW-0234">DNA repair</keyword>
<keyword id="KW-0238">DNA-binding</keyword>
<keyword id="KW-0539">Nucleus</keyword>
<keyword id="KW-0597">Phosphoprotein</keyword>
<keyword id="KW-1185">Reference proteome</keyword>
<keyword id="KW-0677">Repeat</keyword>
<keyword id="KW-0043">Tumor suppressor</keyword>
<keyword id="KW-0832">Ubl conjugation</keyword>
<dbReference type="EMBL" id="AB107955">
    <property type="protein sequence ID" value="BAC75821.2"/>
    <property type="molecule type" value="mRNA"/>
</dbReference>
<dbReference type="RefSeq" id="NP_001009858.1">
    <property type="nucleotide sequence ID" value="NM_001009858.1"/>
</dbReference>
<dbReference type="SMR" id="Q864S8"/>
<dbReference type="IntAct" id="Q864S8">
    <property type="interactions" value="1"/>
</dbReference>
<dbReference type="MINT" id="Q864S8"/>
<dbReference type="STRING" id="9685.ENSFCAP00000019777"/>
<dbReference type="PaxDb" id="9685-ENSFCAP00000019777"/>
<dbReference type="GeneID" id="493878"/>
<dbReference type="KEGG" id="fca:493878"/>
<dbReference type="CTD" id="675"/>
<dbReference type="eggNOG" id="KOG4751">
    <property type="taxonomic scope" value="Eukaryota"/>
</dbReference>
<dbReference type="InParanoid" id="Q864S8"/>
<dbReference type="OrthoDB" id="21095at2759"/>
<dbReference type="Proteomes" id="UP000011712">
    <property type="component" value="Unplaced"/>
</dbReference>
<dbReference type="GO" id="GO:0033593">
    <property type="term" value="C:BRCA2-MAGE-D1 complex"/>
    <property type="evidence" value="ECO:0000250"/>
    <property type="project" value="UniProtKB"/>
</dbReference>
<dbReference type="GO" id="GO:0005813">
    <property type="term" value="C:centrosome"/>
    <property type="evidence" value="ECO:0000250"/>
    <property type="project" value="UniProtKB"/>
</dbReference>
<dbReference type="GO" id="GO:0005634">
    <property type="term" value="C:nucleus"/>
    <property type="evidence" value="ECO:0000250"/>
    <property type="project" value="UniProtKB"/>
</dbReference>
<dbReference type="GO" id="GO:0032991">
    <property type="term" value="C:protein-containing complex"/>
    <property type="evidence" value="ECO:0000250"/>
    <property type="project" value="UniProtKB"/>
</dbReference>
<dbReference type="GO" id="GO:0030141">
    <property type="term" value="C:secretory granule"/>
    <property type="evidence" value="ECO:0000250"/>
    <property type="project" value="UniProtKB"/>
</dbReference>
<dbReference type="GO" id="GO:0003677">
    <property type="term" value="F:DNA binding"/>
    <property type="evidence" value="ECO:0007669"/>
    <property type="project" value="UniProtKB-KW"/>
</dbReference>
<dbReference type="GO" id="GO:0043015">
    <property type="term" value="F:gamma-tubulin binding"/>
    <property type="evidence" value="ECO:0000250"/>
    <property type="project" value="UniProtKB"/>
</dbReference>
<dbReference type="GO" id="GO:0051298">
    <property type="term" value="P:centrosome duplication"/>
    <property type="evidence" value="ECO:0000250"/>
    <property type="project" value="UniProtKB"/>
</dbReference>
<dbReference type="GO" id="GO:0006302">
    <property type="term" value="P:double-strand break repair"/>
    <property type="evidence" value="ECO:0000250"/>
    <property type="project" value="UniProtKB"/>
</dbReference>
<dbReference type="GO" id="GO:0000724">
    <property type="term" value="P:double-strand break repair via homologous recombination"/>
    <property type="evidence" value="ECO:0000318"/>
    <property type="project" value="GO_Central"/>
</dbReference>
<dbReference type="GO" id="GO:0033600">
    <property type="term" value="P:negative regulation of mammary gland epithelial cell proliferation"/>
    <property type="evidence" value="ECO:0000250"/>
    <property type="project" value="UniProtKB"/>
</dbReference>
<dbReference type="GO" id="GO:0006289">
    <property type="term" value="P:nucleotide-excision repair"/>
    <property type="evidence" value="ECO:0000250"/>
    <property type="project" value="UniProtKB"/>
</dbReference>
<dbReference type="GO" id="GO:0045893">
    <property type="term" value="P:positive regulation of DNA-templated transcription"/>
    <property type="evidence" value="ECO:0000250"/>
    <property type="project" value="UniProtKB"/>
</dbReference>
<dbReference type="GO" id="GO:0006355">
    <property type="term" value="P:regulation of DNA-templated transcription"/>
    <property type="evidence" value="ECO:0000318"/>
    <property type="project" value="GO_Central"/>
</dbReference>
<dbReference type="CDD" id="cd04493">
    <property type="entry name" value="BRCA2DBD_OB1"/>
    <property type="match status" value="1"/>
</dbReference>
<dbReference type="CDD" id="cd04494">
    <property type="entry name" value="BRCA2DBD_OB2"/>
    <property type="match status" value="1"/>
</dbReference>
<dbReference type="CDD" id="cd04495">
    <property type="entry name" value="BRCA2DBD_OB3"/>
    <property type="match status" value="1"/>
</dbReference>
<dbReference type="FunFam" id="2.40.50.140:FF:000205">
    <property type="entry name" value="Breast cancer susceptibility protein 2"/>
    <property type="match status" value="1"/>
</dbReference>
<dbReference type="FunFam" id="2.40.50.140:FF:000211">
    <property type="entry name" value="breast cancer type 2 susceptibility protein"/>
    <property type="match status" value="1"/>
</dbReference>
<dbReference type="Gene3D" id="6.10.70.10">
    <property type="match status" value="1"/>
</dbReference>
<dbReference type="Gene3D" id="2.40.50.140">
    <property type="entry name" value="Nucleic acid-binding proteins"/>
    <property type="match status" value="3"/>
</dbReference>
<dbReference type="InterPro" id="IPR015525">
    <property type="entry name" value="BRCA2"/>
</dbReference>
<dbReference type="InterPro" id="IPR015252">
    <property type="entry name" value="BRCA2_hlx"/>
</dbReference>
<dbReference type="InterPro" id="IPR036315">
    <property type="entry name" value="BRCA2_hlx_sf"/>
</dbReference>
<dbReference type="InterPro" id="IPR015187">
    <property type="entry name" value="BRCA2_OB_1"/>
</dbReference>
<dbReference type="InterPro" id="IPR048262">
    <property type="entry name" value="BRCA2_OB_2_dom"/>
</dbReference>
<dbReference type="InterPro" id="IPR015188">
    <property type="entry name" value="BRCA2_OB_3"/>
</dbReference>
<dbReference type="InterPro" id="IPR002093">
    <property type="entry name" value="BRCA2_repeat"/>
</dbReference>
<dbReference type="InterPro" id="IPR055077">
    <property type="entry name" value="BRCA2_TR2"/>
</dbReference>
<dbReference type="InterPro" id="IPR012340">
    <property type="entry name" value="NA-bd_OB-fold"/>
</dbReference>
<dbReference type="InterPro" id="IPR015205">
    <property type="entry name" value="Tower_dom"/>
</dbReference>
<dbReference type="PANTHER" id="PTHR11289:SF0">
    <property type="entry name" value="BREAST CANCER TYPE 2 SUSCEPTIBILITY PROTEIN"/>
    <property type="match status" value="1"/>
</dbReference>
<dbReference type="PANTHER" id="PTHR11289">
    <property type="entry name" value="BREAST CANCER TYPE 2 SUSCEPTIBILITY PROTEIN BRCA2"/>
    <property type="match status" value="1"/>
</dbReference>
<dbReference type="Pfam" id="PF09169">
    <property type="entry name" value="BRCA-2_helical"/>
    <property type="match status" value="1"/>
</dbReference>
<dbReference type="Pfam" id="PF09103">
    <property type="entry name" value="BRCA-2_OB1"/>
    <property type="match status" value="1"/>
</dbReference>
<dbReference type="Pfam" id="PF09104">
    <property type="entry name" value="BRCA-2_OB3"/>
    <property type="match status" value="1"/>
</dbReference>
<dbReference type="Pfam" id="PF00634">
    <property type="entry name" value="BRCA2"/>
    <property type="match status" value="7"/>
</dbReference>
<dbReference type="Pfam" id="PF22687">
    <property type="entry name" value="BRCA2_TR2"/>
    <property type="match status" value="1"/>
</dbReference>
<dbReference type="Pfam" id="PF21318">
    <property type="entry name" value="BRCA2DBD_OB2"/>
    <property type="match status" value="1"/>
</dbReference>
<dbReference type="Pfam" id="PF09121">
    <property type="entry name" value="Tower"/>
    <property type="match status" value="1"/>
</dbReference>
<dbReference type="PIRSF" id="PIRSF002397">
    <property type="entry name" value="BRCA2"/>
    <property type="match status" value="1"/>
</dbReference>
<dbReference type="SMART" id="SM01341">
    <property type="entry name" value="Tower"/>
    <property type="match status" value="1"/>
</dbReference>
<dbReference type="SUPFAM" id="SSF81872">
    <property type="entry name" value="BRCA2 helical domain"/>
    <property type="match status" value="1"/>
</dbReference>
<dbReference type="SUPFAM" id="SSF81878">
    <property type="entry name" value="BRCA2 tower domain"/>
    <property type="match status" value="1"/>
</dbReference>
<dbReference type="SUPFAM" id="SSF50249">
    <property type="entry name" value="Nucleic acid-binding proteins"/>
    <property type="match status" value="3"/>
</dbReference>
<dbReference type="PROSITE" id="PS50138">
    <property type="entry name" value="BRCA2_REPEAT"/>
    <property type="match status" value="7"/>
</dbReference>
<protein>
    <recommendedName>
        <fullName>Breast cancer type 2 susceptibility protein homolog</fullName>
    </recommendedName>
    <alternativeName>
        <fullName>Fanconi anemia group D1 protein homolog</fullName>
    </alternativeName>
</protein>
<organism>
    <name type="scientific">Felis catus</name>
    <name type="common">Cat</name>
    <name type="synonym">Felis silvestris catus</name>
    <dbReference type="NCBI Taxonomy" id="9685"/>
    <lineage>
        <taxon>Eukaryota</taxon>
        <taxon>Metazoa</taxon>
        <taxon>Chordata</taxon>
        <taxon>Craniata</taxon>
        <taxon>Vertebrata</taxon>
        <taxon>Euteleostomi</taxon>
        <taxon>Mammalia</taxon>
        <taxon>Eutheria</taxon>
        <taxon>Laurasiatheria</taxon>
        <taxon>Carnivora</taxon>
        <taxon>Feliformia</taxon>
        <taxon>Felidae</taxon>
        <taxon>Felinae</taxon>
        <taxon>Felis</taxon>
    </lineage>
</organism>
<feature type="chain" id="PRO_0000227014" description="Breast cancer type 2 susceptibility protein homolog">
    <location>
        <begin position="1"/>
        <end position="3372"/>
    </location>
</feature>
<feature type="repeat" description="BRCA2 1">
    <location>
        <begin position="994"/>
        <end position="1028"/>
    </location>
</feature>
<feature type="repeat" description="BRCA2 2">
    <location>
        <begin position="1208"/>
        <end position="1242"/>
    </location>
</feature>
<feature type="repeat" description="BRCA2 3">
    <location>
        <begin position="1417"/>
        <end position="1451"/>
    </location>
</feature>
<feature type="repeat" description="BRCA2 4">
    <location>
        <begin position="1518"/>
        <end position="1552"/>
    </location>
</feature>
<feature type="repeat" description="BRCA2 5">
    <location>
        <begin position="1663"/>
        <end position="1697"/>
    </location>
</feature>
<feature type="repeat" description="BRCA2 6">
    <location>
        <begin position="1925"/>
        <end position="1959"/>
    </location>
</feature>
<feature type="repeat" description="BRCA2 7">
    <location>
        <begin position="1995"/>
        <end position="2029"/>
    </location>
</feature>
<feature type="region of interest" description="Interaction with PALB2" evidence="1">
    <location>
        <begin position="1"/>
        <end position="40"/>
    </location>
</feature>
<feature type="region of interest" description="Disordered" evidence="5">
    <location>
        <begin position="234"/>
        <end position="260"/>
    </location>
</feature>
<feature type="region of interest" description="Interaction with NPM1" evidence="1">
    <location>
        <begin position="630"/>
        <end position="992"/>
    </location>
</feature>
<feature type="region of interest" description="Disordered" evidence="5">
    <location>
        <begin position="704"/>
        <end position="783"/>
    </location>
</feature>
<feature type="region of interest" description="Interaction with RAD51" evidence="4">
    <location>
        <begin position="995"/>
        <end position="2026"/>
    </location>
</feature>
<feature type="region of interest" description="Disordered" evidence="5">
    <location>
        <begin position="1867"/>
        <end position="1891"/>
    </location>
</feature>
<feature type="region of interest" description="Disordered" evidence="5">
    <location>
        <begin position="2034"/>
        <end position="2062"/>
    </location>
</feature>
<feature type="region of interest" description="Interaction with HSF2BP" evidence="3">
    <location>
        <begin position="2213"/>
        <end position="2279"/>
    </location>
</feature>
<feature type="region of interest" description="Disordered" evidence="5">
    <location>
        <begin position="2359"/>
        <end position="2395"/>
    </location>
</feature>
<feature type="region of interest" description="Interaction with SEM1" evidence="3">
    <location>
        <begin position="2425"/>
        <end position="2776"/>
    </location>
</feature>
<feature type="region of interest" description="Disordered" evidence="5">
    <location>
        <begin position="3181"/>
        <end position="3203"/>
    </location>
</feature>
<feature type="region of interest" description="Disordered" evidence="5">
    <location>
        <begin position="3308"/>
        <end position="3372"/>
    </location>
</feature>
<feature type="short sequence motif" description="Nuclear export signal; masked by interaction with SEM1" evidence="3">
    <location>
        <begin position="2626"/>
        <end position="2642"/>
    </location>
</feature>
<feature type="compositionally biased region" description="Basic and acidic residues" evidence="5">
    <location>
        <begin position="243"/>
        <end position="252"/>
    </location>
</feature>
<feature type="compositionally biased region" description="Basic and acidic residues" evidence="5">
    <location>
        <begin position="705"/>
        <end position="725"/>
    </location>
</feature>
<feature type="compositionally biased region" description="Polar residues" evidence="5">
    <location>
        <begin position="748"/>
        <end position="763"/>
    </location>
</feature>
<feature type="compositionally biased region" description="Polar residues" evidence="5">
    <location>
        <begin position="1877"/>
        <end position="1891"/>
    </location>
</feature>
<feature type="compositionally biased region" description="Basic and acidic residues" evidence="5">
    <location>
        <begin position="2359"/>
        <end position="2387"/>
    </location>
</feature>
<feature type="compositionally biased region" description="Polar residues" evidence="5">
    <location>
        <begin position="3186"/>
        <end position="3196"/>
    </location>
</feature>
<feature type="compositionally biased region" description="Polar residues" evidence="5">
    <location>
        <begin position="3308"/>
        <end position="3321"/>
    </location>
</feature>
<feature type="compositionally biased region" description="Basic residues" evidence="5">
    <location>
        <begin position="3361"/>
        <end position="3372"/>
    </location>
</feature>
<feature type="modified residue" description="Phosphoserine" evidence="3">
    <location>
        <position position="435"/>
    </location>
</feature>
<feature type="modified residue" description="Phosphoserine" evidence="3">
    <location>
        <position position="483"/>
    </location>
</feature>
<feature type="modified residue" description="Phosphoserine" evidence="3">
    <location>
        <position position="1924"/>
    </location>
</feature>
<feature type="modified residue" description="Phosphothreonine" evidence="3">
    <location>
        <position position="1990"/>
    </location>
</feature>
<feature type="modified residue" description="Phosphoserine" evidence="3">
    <location>
        <position position="2039"/>
    </location>
</feature>
<feature type="modified residue" description="Phosphoserine; by CDK1 and CDK2" evidence="3">
    <location>
        <position position="3236"/>
    </location>
</feature>
<feature type="modified residue" description="Phosphoserine" evidence="3">
    <location>
        <position position="3264"/>
    </location>
</feature>
<feature type="modified residue" description="Phosphothreonine; by CHEK1 and CHEK2" evidence="3">
    <location>
        <position position="3331"/>
    </location>
</feature>
<gene>
    <name type="primary">BRCA2</name>
    <name type="synonym">FANCD1</name>
</gene>
<name>BRCA2_FELCA</name>
<proteinExistence type="evidence at transcript level"/>
<comment type="function">
    <text evidence="3">Involved in double-strand break repair and/or homologous recombination. Binds RAD51 and potentiates recombinational DNA repair by promoting assembly of RAD51 onto single-stranded DNA (ssDNA). Acts by targeting RAD51 to ssDNA over double-stranded DNA, enabling RAD51 to displace replication protein-A (RPA) from ssDNA and stabilizing RAD51-ssDNA filaments by blocking ATP hydrolysis. Part of a PALB2-scaffolded HR complex containing RAD51C and which is thought to play a role in DNA repair by HR. May participate in S phase checkpoint activation. Binds selectively to ssDNA, and to ssDNA in tailed duplexes and replication fork structures. May play a role in the extension step after strand invasion at replication-dependent DNA double-strand breaks; together with PALB2 is involved in both POLH localization at collapsed replication forks and DNA polymerization activity. In concert with NPM1, regulates centrosome duplication. Interacts with the TREX-2 complex (transcription and export complex 2) subunits PCID2 and SEM1, and is required to prevent R-loop-associated DNA damage and thus transcription-associated genomic instability, independently of its known role in homologous recombination (By similarity).</text>
</comment>
<comment type="subunit">
    <text evidence="2 3 4">Monomer and dimer. Interacts with RAD51; regulates RAD51 recruitment and function at sites of DNA repair. Interacts with SEM1, WDR16, USP11, DMC1, ROCK2 and NPM1. Interacts with both nonubiquitinated and monoubiquitinated FANCD2; this complex also includes XRCC3 and phosphorylated FANCG. Part of a BRCA complex containing BRCA1, BRCA2 and PALB2. Component of the homologous recombination repair (HR) complex composed of ERCC5/XPG, BRCA2, PALB2, DSS1 and RAD51 (By similarity). Within the complex, interacts with ERCC5/XPG and PALB2 (By similarity). Interacts directly with PALB2 which may serve as a scaffold for a HR complex containing PALB2, BRCA2, RAD51C, RAD51 and XRCC3. Interacts with BRCA1 only in the presence of PALB2 which serves as the bridging protein. Interacts with POLH; the interaction is direct. Interacts with the TREX-2 complex subunits PCID2 and SEM1 (By similarity). Interacts with HSF2BP and BRME1; the interaction with HSF2BP is direct and allows the formation of a ternary complex. The complex BRME1:HSF2BP:BRCA2 interacts with SPATA22, MEIOB and RAD51 (By similarity).</text>
</comment>
<comment type="subcellular location">
    <subcellularLocation>
        <location evidence="3">Nucleus</location>
    </subcellularLocation>
    <subcellularLocation>
        <location evidence="3">Cytoplasm</location>
        <location evidence="3">Cytoskeleton</location>
        <location evidence="3">Microtubule organizing center</location>
        <location evidence="3">Centrosome</location>
    </subcellularLocation>
</comment>
<comment type="PTM">
    <text evidence="3">Phosphorylated by ATM upon irradiation-induced DNA damage. Phosphorylation by CHEK1 and CHEK2 regulates interaction with RAD51. Phosphorylation at Ser-3236 by CDK1 and CDK2 is low in S phase when recombination is active, but increases as cells progress towards mitosis; this phosphorylation prevents homologous recombination-dependent repair during S phase and G2 by inhibiting RAD51 binding.</text>
</comment>
<comment type="PTM">
    <text evidence="3">Ubiquitinated in the absence of DNA damage; this does not lead to proteasomal degradation. In contrast, ubiquitination in response to DNA damage leads to proteasomal degradation.</text>
</comment>
<sequence>MPIGCKERPTFFEIFRTRCNKADLGPISLNWFEELCLEAPPYNSEPTEESGYKISYEPNLFKTPQRKPCHQLASTPIIFKEQGLIPPIYQQSPLKELGKDITNSKHRSCCTMKSKMDQTNDVTSPPLNSCLSESPLLRSTHVTPQREKSVVCGSLFHTPKLTKGQTPKRISESLGAEVDPDMSWSSSLATPPTLSSTVLIVRDEEASAAVFPNDTTAIFKSYFCNHDESLKKNDRFIPSGPDSENKSQREAKSQGLGKMVGNSCDKVNSCKDPFGNSTLNVLEDGVRERVADVSEEDSFPLCVPKCKTRNLQKIKTSKTRKNIFNETTDECKEAKKQMKENKHSFVSEMEANASDPLDSNVTNQKPFGNGSDKISKEVVLSSASESCHLTLSGLNGTHMEKLPLLCISSCDQNNSEKDLITTEKECTNFIILEDSLPQISGVPKCTEKILNEEIVVNKIDEGQCLESHEDSILAVKQAVFETSLIASPLQGIRKSIFRIRESPEETFSAVFSNNITDPNFKEEHEASESVLEKHSICSQKEDSLSTSSLDNGSWPATIKHTSVALKNSGLISTLKKKTKKFIYVVNDETSYQGLKTQKDQQSGLMNYSAQFEANVLEGPLTFANADSGLLHSSVKKTCLQNDSKEPILSLTNSFGTLLRKVSNKGSSSPNNKIISQDLDYKEAKIKKEKLQSFISTETNCLSSLQEKHCEDDTKSQRVADRKEEILPAVSQPSVPYSEVEDSGIHFQTLKSFSSDPDKSSQLTPHPRDPPSNPVGLSRGRESYEVSETLKCKNHEAGFELTKTMENSQEIHVLNEHAKKAKLLSTEKYVTEASPSMKVPFNQNAHLTIIQKDQKETTLISKITMNPNSEELFPDGDNFVFKITKERNVPVLGSIKELQDSDLCCVKEPVLENSTMVVYTDMDDKQAAKVSITKGFDSSNIDDLTEKDRNSIKQQLRMTLDQDSKSDITLDSDMKSNGNNDYMDNWARLSDPILNHNFGNGFRTASNKEIKLSEHNIKKSKMLFKDIEERYPTNLACIEIVNTPLESQEKLSKPHILDPQSINTVSGCVQSSAYVSDSENRHTTPPTLSLKRDFDSNHNLTPSQKAEITELSTILEESGSQFEFTQFRKPSHLKQKNPCEMPEKHLTISNTTPEEQKDGHLRLTINALSISQGDSSKKFEGIIGGKQKLACLSKTSCNKSASGHLTGKNEVEFRGFYSARGTKLNVCSEALQKAKKLFSDLENISEETSVEVDRSFSSSKCNGSVSMFKKENCNNEKKLNEKNNKYRLILQNNIEMTTGIFVAEDTEGYKRNIENKANKYTDASRNVYNFREADGSDSSKNDTVYIHKEENGLPYIDQHDIDLKLSSQFIKEGNTQIKEGLSDLTCLEVVKAEETLHVNTSNKEHLTANTMGRITKDFDIFDVSFQTASGKNIRVSRASLNKVTNLLDQKCTEEELNNFADSLNSELLSGIDINKADISHHGEMEILKKRQMKESDLTGTENKSLTLQQRPEYEIKKIKEPTILGFHTASGKRIEIAKESLDKVKNLFDEQEQDKSEMTNFSHRGTKMSKGREECEGGLRLACKTIEITPASKEEEMQKPLEKNLVSNEIVVVPRLLSDNLYKQTENLKIPNRASLKVKVHENTGKETAKKPTTCTNQSTYSATENSALSFYTGHGRKISVSQSSILEVKKWLRGGELDDQPEKTVYNISEYLPKSKVDNSGIEPVVRNVGERENTSVSEIMFTVREADTDPQSVNEDICVQRLVTNFSCKKENTAIKVTVSDSNNFDSTQKLNSDSNDAVPVYTTASSERVLVAHETKVAEGFTENCSMAIKQTTKSKPGKIVAGYRKAPDDSEDTICPNSLDGAECSSPSHKDFAETQSEQTPQLNQSISGFKKRSEIPPHQINLKTSDICKLSTGKRLQSISYTNACGIFSTASGKCVQVSDAALQKARQVFSKVEDSAKQPFSKVSFKHNEDHSDKFTREENTMIHTPQNLLSSAFSGFSTASGKQVPVSESALCKVKGILEEFDVMRTECGPQRSPTSRQDVSKMPPPSCVENKTPKHSVNSKLEKAYNKEFKLSSNSKIENGSSENHSVQVSPYPSQFKQDKQLIQGNKASLVENIHLLEKEQALPKNIKWKLETEAFPNLPLKTDTAIHSTDSKDPENYFETETVEIAKAFMEDGELTDADLLSHARHFLPTCQHSEETLVSNSRRGKRRGVLVSVGEPPIKRNLLNEFDRIIKNQEKSLKASKSTPDGIIKDRSLFMHHISLEPVTCGPFSTTKKRQEIQNPNFTAPGQKFLSKSHFYEHLALEKSSSNVSISGQPFCTVPATRSEKRGHSITPSKPVKVFVPPFKTKSRFLQDEQHISKNTHVEENKQKPNNIDEHSSGDSKNNINNSEIHQLNKNNSSQAATMVFTKCEKEPLDLIASLQNARDIQDMRIREKRKQHIFPQPGSLFLAKTSTVPRISLRVAVEGRVPSACSHKQLYMYGVSKHCVKINSKNAESFQFHTQDYFGKEVQWAKEGIQLADGGWLIPSNDGKAGKEEFYRALCDTPGVDPNLISRIWVYNHYRWIIWKLAAMEFAFPKEFANRCLSPERVLLQLKYRYDMEIDRSKRSAIKKIMERDDTAAKTLVLCISETISSSTDLSETSGSKTSGVGTKNVGIVELTDGWYAIKAQLDPPLLALVKKGRLTVGHKIIIHGAELAGSPDACTPLEAPESLILKISANSTRPACWYAKLGFFPDPRPFPLPLSSLFSDGGNVGCVDVVIQRTYPIQWMEKTPSGLCIFRNEREEEREATKYAEAQQKKLEVLFNKIQAEFEKHDENITKRCVPLRALTRQQVCALQDGAELYEAVKNAPDPASLEAYFSEEQIRALNNHRQMLNDKKQAQIQLEFRKAMESAEQGEQMLPRDVTTVWKMRIISYGKKEKDSVTLSIWRPSSDLYSLLTEGKRYRIYHLATSQSKSKSERAHIQLTATKKTQYQQLPASDELLFQVYQPREPLYFNKLLDPDFQPPCSEVDLIGFVVSVVKKIGFAPLVYLSDECHNLLAIKVWTDLNEDIVKPHTLIAASNLQWRPESKSGIPTLFAGDFSRFSASPKEGHFQETFHKMKNTIENVETFCNDAENKLVHILNANSPKVSTPMKDYASEPHTIQTVLGLGNKLSMSSPNSEMNYQSPLSLCKPKAKSVPTPGSAQMTSKSCYKGERELDDPKTCKKRKALDFLSRLPLPPPVSPICTFVSPAAQKAFQPPRSCGTKYETPIKKRELNSPQMTPLKFNDTSLVESDSIADEELALINTQALLSGLAGEDQLMSLNDSPRTAPTSSKDYVRPKSYPTAPGIRDCENPQASTEGGEPDVQDTDTVKRSSMRLQRRQQQT</sequence>
<reference key="1">
    <citation type="journal article" date="2003" name="J. Vet. Med. Sci.">
        <title>Properties of the tumor suppressor gene brca2 in the cat.</title>
        <authorList>
            <person name="Oonuma T."/>
            <person name="Morimatsu M."/>
            <person name="Ochiai K."/>
            <person name="Syuto B."/>
        </authorList>
    </citation>
    <scope>NUCLEOTIDE SEQUENCE [MRNA]</scope>
</reference>